<name>MPKC_ASPFU</name>
<accession>Q4WUN7</accession>
<accession>Q208R1</accession>
<feature type="chain" id="PRO_0000289713" description="Mitogen-activated protein kinase mpkC">
    <location>
        <begin position="1"/>
        <end position="378"/>
    </location>
</feature>
<feature type="domain" description="Protein kinase" evidence="4">
    <location>
        <begin position="20"/>
        <end position="300"/>
    </location>
</feature>
<feature type="short sequence motif" description="TXY">
    <location>
        <begin position="171"/>
        <end position="173"/>
    </location>
</feature>
<feature type="active site" description="Proton acceptor" evidence="4 5">
    <location>
        <position position="141"/>
    </location>
</feature>
<feature type="binding site" evidence="4">
    <location>
        <begin position="26"/>
        <end position="34"/>
    </location>
    <ligand>
        <name>ATP</name>
        <dbReference type="ChEBI" id="CHEBI:30616"/>
    </ligand>
</feature>
<feature type="binding site" evidence="4">
    <location>
        <position position="49"/>
    </location>
    <ligand>
        <name>ATP</name>
        <dbReference type="ChEBI" id="CHEBI:30616"/>
    </ligand>
</feature>
<feature type="modified residue" description="Phosphothreonine" evidence="1">
    <location>
        <position position="171"/>
    </location>
</feature>
<feature type="modified residue" description="Phosphotyrosine" evidence="1">
    <location>
        <position position="173"/>
    </location>
</feature>
<keyword id="KW-0067">ATP-binding</keyword>
<keyword id="KW-0963">Cytoplasm</keyword>
<keyword id="KW-0418">Kinase</keyword>
<keyword id="KW-0547">Nucleotide-binding</keyword>
<keyword id="KW-0539">Nucleus</keyword>
<keyword id="KW-0597">Phosphoprotein</keyword>
<keyword id="KW-1185">Reference proteome</keyword>
<keyword id="KW-0723">Serine/threonine-protein kinase</keyword>
<keyword id="KW-0808">Transferase</keyword>
<keyword id="KW-0843">Virulence</keyword>
<proteinExistence type="evidence at protein level"/>
<gene>
    <name type="primary">mpkC</name>
    <name type="ORF">AFUA_5G09100</name>
</gene>
<comment type="function">
    <text evidence="6 7 8 9 10 11 12">Mitogen-activated protein kinase; part of an osmotic and general signal pathways involved in regulation of the response to the cell wall damage, oxidative stress, drug resistance, and establishment of infection (PubMed:25459537, PubMed:26878695, PubMed:27538790, PubMed:31134001, PubMed:32743127). Required for growth on media where sorbitol or mannitol is the sole carbon source (PubMed:16998074). With sakA, plays a redundant or cooperative role in the conidial stress resistance (PubMed:25459537). Also plays a supportive role in osmotic stress adaptation when sakA is deficient (PubMed:25459537, PubMed:27538790). Involved in paradoxical growth, the cell wall integrity (CWI) pathway and biofilm formation (PubMed:26878695, PubMed:32743127). Acts by modulating sakA activity upon exposure to several types o stresses and during cell wall biosynthesis (PubMed:26878695). Also collaborates with sakA to allow ful virulence in a neutropenic murine model of invasive pulmonary aspergillosis (PubMed:26878695). MpkC and sakA have both independent and collaborative functions during the transcriptional response to transient osmotic stress, and mpkC plays a major role in the modulation of the response to DNA metabolism while activating mitochondrial functions and cation transport (PubMed:27706915).</text>
</comment>
<comment type="catalytic activity">
    <reaction evidence="2">
        <text>L-seryl-[protein] + ATP = O-phospho-L-seryl-[protein] + ADP + H(+)</text>
        <dbReference type="Rhea" id="RHEA:17989"/>
        <dbReference type="Rhea" id="RHEA-COMP:9863"/>
        <dbReference type="Rhea" id="RHEA-COMP:11604"/>
        <dbReference type="ChEBI" id="CHEBI:15378"/>
        <dbReference type="ChEBI" id="CHEBI:29999"/>
        <dbReference type="ChEBI" id="CHEBI:30616"/>
        <dbReference type="ChEBI" id="CHEBI:83421"/>
        <dbReference type="ChEBI" id="CHEBI:456216"/>
        <dbReference type="EC" id="2.7.11.24"/>
    </reaction>
</comment>
<comment type="catalytic activity">
    <reaction evidence="2">
        <text>L-threonyl-[protein] + ATP = O-phospho-L-threonyl-[protein] + ADP + H(+)</text>
        <dbReference type="Rhea" id="RHEA:46608"/>
        <dbReference type="Rhea" id="RHEA-COMP:11060"/>
        <dbReference type="Rhea" id="RHEA-COMP:11605"/>
        <dbReference type="ChEBI" id="CHEBI:15378"/>
        <dbReference type="ChEBI" id="CHEBI:30013"/>
        <dbReference type="ChEBI" id="CHEBI:30616"/>
        <dbReference type="ChEBI" id="CHEBI:61977"/>
        <dbReference type="ChEBI" id="CHEBI:456216"/>
        <dbReference type="EC" id="2.7.11.24"/>
    </reaction>
</comment>
<comment type="cofactor">
    <cofactor evidence="3">
        <name>Mg(2+)</name>
        <dbReference type="ChEBI" id="CHEBI:18420"/>
    </cofactor>
</comment>
<comment type="activity regulation">
    <text evidence="2">Activated by tyrosine and threonine phosphorylation.</text>
</comment>
<comment type="subunit">
    <text evidence="11">Interacts with sakA upon osmotic and cell wall stresses.</text>
</comment>
<comment type="subcellular location">
    <subcellularLocation>
        <location evidence="8 9">Cytoplasm</location>
    </subcellularLocation>
    <subcellularLocation>
        <location evidence="8 9">Nucleus</location>
    </subcellularLocation>
    <text evidence="8 9">Translocates to the nucleus upon osmotic stress and cell wall damage.</text>
</comment>
<comment type="domain">
    <text evidence="2">The TXY motif contains the threonine and tyrosine residues whose phosphorylation activates the MAP kinases.</text>
</comment>
<comment type="PTM">
    <text evidence="2">Dually phosphorylated on Thr-171 and Tyr-173, which activates the enzyme.</text>
</comment>
<comment type="disruption phenotype">
    <text evidence="6 7 8 12">Germinates poorly on and is unable to utilize polyalcohol sugars as sole carbon sources (PubMed:16998074). Increases sentitivity of hypha but also conidia to osmotic stress, oxidative stress and cell wall damaging agents (PubMed:25459537, PubMed:26878695). The double mpkC and sakA deletion completely abolishes mpkA phosphorylation (PubMed:26878695). Affects the cell surface and the extracellular matrix during biofilm formation and reduced the adherence (PubMed:32743127).</text>
</comment>
<comment type="similarity">
    <text evidence="4">Belongs to the protein kinase superfamily. Ser/Thr protein kinase family. MAP kinase subfamily. HOG1 sub-subfamily.</text>
</comment>
<evidence type="ECO:0000250" key="1"/>
<evidence type="ECO:0000250" key="2">
    <source>
        <dbReference type="UniProtKB" id="P32485"/>
    </source>
</evidence>
<evidence type="ECO:0000250" key="3">
    <source>
        <dbReference type="UniProtKB" id="Q16539"/>
    </source>
</evidence>
<evidence type="ECO:0000255" key="4">
    <source>
        <dbReference type="PROSITE-ProRule" id="PRU00159"/>
    </source>
</evidence>
<evidence type="ECO:0000255" key="5">
    <source>
        <dbReference type="PROSITE-ProRule" id="PRU10027"/>
    </source>
</evidence>
<evidence type="ECO:0000269" key="6">
    <source>
    </source>
</evidence>
<evidence type="ECO:0000269" key="7">
    <source>
    </source>
</evidence>
<evidence type="ECO:0000269" key="8">
    <source>
    </source>
</evidence>
<evidence type="ECO:0000269" key="9">
    <source>
    </source>
</evidence>
<evidence type="ECO:0000269" key="10">
    <source>
    </source>
</evidence>
<evidence type="ECO:0000269" key="11">
    <source>
    </source>
</evidence>
<evidence type="ECO:0000269" key="12">
    <source>
    </source>
</evidence>
<protein>
    <recommendedName>
        <fullName>Mitogen-activated protein kinase mpkC</fullName>
        <shortName>MAP kinase C</shortName>
        <ecNumber>2.7.11.24</ecNumber>
    </recommendedName>
</protein>
<dbReference type="EC" id="2.7.11.24"/>
<dbReference type="EMBL" id="DQ402475">
    <property type="protein sequence ID" value="ABD64613.1"/>
    <property type="molecule type" value="mRNA"/>
</dbReference>
<dbReference type="EMBL" id="AAHF01000003">
    <property type="protein sequence ID" value="EAL91689.2"/>
    <property type="molecule type" value="Genomic_DNA"/>
</dbReference>
<dbReference type="RefSeq" id="XP_753727.2">
    <property type="nucleotide sequence ID" value="XM_748634.2"/>
</dbReference>
<dbReference type="SMR" id="Q4WUN7"/>
<dbReference type="STRING" id="330879.Q4WUN7"/>
<dbReference type="EnsemblFungi" id="EAL91689">
    <property type="protein sequence ID" value="EAL91689"/>
    <property type="gene ID" value="AFUA_5G09100"/>
</dbReference>
<dbReference type="GeneID" id="3510755"/>
<dbReference type="KEGG" id="afm:AFUA_5G09100"/>
<dbReference type="VEuPathDB" id="FungiDB:Afu5g09100"/>
<dbReference type="eggNOG" id="KOG0660">
    <property type="taxonomic scope" value="Eukaryota"/>
</dbReference>
<dbReference type="HOGENOM" id="CLU_000288_181_1_1"/>
<dbReference type="InParanoid" id="Q4WUN7"/>
<dbReference type="OMA" id="DHIHQFF"/>
<dbReference type="OrthoDB" id="192887at2759"/>
<dbReference type="PHI-base" id="PHI:6085"/>
<dbReference type="Proteomes" id="UP000002530">
    <property type="component" value="Chromosome 5"/>
</dbReference>
<dbReference type="GO" id="GO:0005737">
    <property type="term" value="C:cytoplasm"/>
    <property type="evidence" value="ECO:0000318"/>
    <property type="project" value="GO_Central"/>
</dbReference>
<dbReference type="GO" id="GO:0005634">
    <property type="term" value="C:nucleus"/>
    <property type="evidence" value="ECO:0000318"/>
    <property type="project" value="GO_Central"/>
</dbReference>
<dbReference type="GO" id="GO:0005524">
    <property type="term" value="F:ATP binding"/>
    <property type="evidence" value="ECO:0007669"/>
    <property type="project" value="UniProtKB-KW"/>
</dbReference>
<dbReference type="GO" id="GO:0004707">
    <property type="term" value="F:MAP kinase activity"/>
    <property type="evidence" value="ECO:0007669"/>
    <property type="project" value="UniProtKB-EC"/>
</dbReference>
<dbReference type="GO" id="GO:0106310">
    <property type="term" value="F:protein serine kinase activity"/>
    <property type="evidence" value="ECO:0007669"/>
    <property type="project" value="RHEA"/>
</dbReference>
<dbReference type="GO" id="GO:0004674">
    <property type="term" value="F:protein serine/threonine kinase activity"/>
    <property type="evidence" value="ECO:0000318"/>
    <property type="project" value="GO_Central"/>
</dbReference>
<dbReference type="GO" id="GO:0015976">
    <property type="term" value="P:carbon utilization"/>
    <property type="evidence" value="ECO:0000315"/>
    <property type="project" value="AspGD"/>
</dbReference>
<dbReference type="GO" id="GO:0034599">
    <property type="term" value="P:cellular response to oxidative stress"/>
    <property type="evidence" value="ECO:0000318"/>
    <property type="project" value="GO_Central"/>
</dbReference>
<dbReference type="GO" id="GO:0007231">
    <property type="term" value="P:osmosensory signaling pathway"/>
    <property type="evidence" value="ECO:0000318"/>
    <property type="project" value="GO_Central"/>
</dbReference>
<dbReference type="GO" id="GO:0051403">
    <property type="term" value="P:stress-activated MAPK cascade"/>
    <property type="evidence" value="ECO:0000318"/>
    <property type="project" value="GO_Central"/>
</dbReference>
<dbReference type="FunFam" id="1.10.510.10:FF:000049">
    <property type="entry name" value="Mitogen-activated protein kinase"/>
    <property type="match status" value="1"/>
</dbReference>
<dbReference type="FunFam" id="3.30.200.20:FF:000046">
    <property type="entry name" value="Mitogen-activated protein kinase"/>
    <property type="match status" value="1"/>
</dbReference>
<dbReference type="Gene3D" id="3.30.200.20">
    <property type="entry name" value="Phosphorylase Kinase, domain 1"/>
    <property type="match status" value="1"/>
</dbReference>
<dbReference type="Gene3D" id="1.10.510.10">
    <property type="entry name" value="Transferase(Phosphotransferase) domain 1"/>
    <property type="match status" value="1"/>
</dbReference>
<dbReference type="InterPro" id="IPR011009">
    <property type="entry name" value="Kinase-like_dom_sf"/>
</dbReference>
<dbReference type="InterPro" id="IPR050117">
    <property type="entry name" value="MAP_kinase"/>
</dbReference>
<dbReference type="InterPro" id="IPR003527">
    <property type="entry name" value="MAP_kinase_CS"/>
</dbReference>
<dbReference type="InterPro" id="IPR000719">
    <property type="entry name" value="Prot_kinase_dom"/>
</dbReference>
<dbReference type="InterPro" id="IPR017441">
    <property type="entry name" value="Protein_kinase_ATP_BS"/>
</dbReference>
<dbReference type="InterPro" id="IPR008271">
    <property type="entry name" value="Ser/Thr_kinase_AS"/>
</dbReference>
<dbReference type="PANTHER" id="PTHR24055">
    <property type="entry name" value="MITOGEN-ACTIVATED PROTEIN KINASE"/>
    <property type="match status" value="1"/>
</dbReference>
<dbReference type="Pfam" id="PF00069">
    <property type="entry name" value="Pkinase"/>
    <property type="match status" value="1"/>
</dbReference>
<dbReference type="SMART" id="SM00220">
    <property type="entry name" value="S_TKc"/>
    <property type="match status" value="1"/>
</dbReference>
<dbReference type="SUPFAM" id="SSF56112">
    <property type="entry name" value="Protein kinase-like (PK-like)"/>
    <property type="match status" value="1"/>
</dbReference>
<dbReference type="PROSITE" id="PS01351">
    <property type="entry name" value="MAPK"/>
    <property type="match status" value="1"/>
</dbReference>
<dbReference type="PROSITE" id="PS00107">
    <property type="entry name" value="PROTEIN_KINASE_ATP"/>
    <property type="match status" value="1"/>
</dbReference>
<dbReference type="PROSITE" id="PS50011">
    <property type="entry name" value="PROTEIN_KINASE_DOM"/>
    <property type="match status" value="1"/>
</dbReference>
<dbReference type="PROSITE" id="PS00108">
    <property type="entry name" value="PROTEIN_KINASE_ST"/>
    <property type="match status" value="1"/>
</dbReference>
<organism>
    <name type="scientific">Aspergillus fumigatus (strain ATCC MYA-4609 / CBS 101355 / FGSC A1100 / Af293)</name>
    <name type="common">Neosartorya fumigata</name>
    <dbReference type="NCBI Taxonomy" id="330879"/>
    <lineage>
        <taxon>Eukaryota</taxon>
        <taxon>Fungi</taxon>
        <taxon>Dikarya</taxon>
        <taxon>Ascomycota</taxon>
        <taxon>Pezizomycotina</taxon>
        <taxon>Eurotiomycetes</taxon>
        <taxon>Eurotiomycetidae</taxon>
        <taxon>Eurotiales</taxon>
        <taxon>Aspergillaceae</taxon>
        <taxon>Aspergillus</taxon>
        <taxon>Aspergillus subgen. Fumigati</taxon>
    </lineage>
</organism>
<reference key="1">
    <citation type="journal article" date="2006" name="Eukaryot. Cell">
        <title>Novel mitogen-activated protein kinase MpkC of Aspergillus fumigatus is required for utilization of polyalcohol sugars.</title>
        <authorList>
            <person name="Reyes G."/>
            <person name="Romans A."/>
            <person name="Nguyen C.K."/>
            <person name="May G.S."/>
        </authorList>
    </citation>
    <scope>NUCLEOTIDE SEQUENCE [MRNA]</scope>
    <scope>FUNCTION</scope>
    <scope>DISRUPTION PHENOTYPE</scope>
</reference>
<reference key="2">
    <citation type="journal article" date="2005" name="Nature">
        <title>Genomic sequence of the pathogenic and allergenic filamentous fungus Aspergillus fumigatus.</title>
        <authorList>
            <person name="Nierman W.C."/>
            <person name="Pain A."/>
            <person name="Anderson M.J."/>
            <person name="Wortman J.R."/>
            <person name="Kim H.S."/>
            <person name="Arroyo J."/>
            <person name="Berriman M."/>
            <person name="Abe K."/>
            <person name="Archer D.B."/>
            <person name="Bermejo C."/>
            <person name="Bennett J.W."/>
            <person name="Bowyer P."/>
            <person name="Chen D."/>
            <person name="Collins M."/>
            <person name="Coulsen R."/>
            <person name="Davies R."/>
            <person name="Dyer P.S."/>
            <person name="Farman M.L."/>
            <person name="Fedorova N."/>
            <person name="Fedorova N.D."/>
            <person name="Feldblyum T.V."/>
            <person name="Fischer R."/>
            <person name="Fosker N."/>
            <person name="Fraser A."/>
            <person name="Garcia J.L."/>
            <person name="Garcia M.J."/>
            <person name="Goble A."/>
            <person name="Goldman G.H."/>
            <person name="Gomi K."/>
            <person name="Griffith-Jones S."/>
            <person name="Gwilliam R."/>
            <person name="Haas B.J."/>
            <person name="Haas H."/>
            <person name="Harris D.E."/>
            <person name="Horiuchi H."/>
            <person name="Huang J."/>
            <person name="Humphray S."/>
            <person name="Jimenez J."/>
            <person name="Keller N."/>
            <person name="Khouri H."/>
            <person name="Kitamoto K."/>
            <person name="Kobayashi T."/>
            <person name="Konzack S."/>
            <person name="Kulkarni R."/>
            <person name="Kumagai T."/>
            <person name="Lafton A."/>
            <person name="Latge J.-P."/>
            <person name="Li W."/>
            <person name="Lord A."/>
            <person name="Lu C."/>
            <person name="Majoros W.H."/>
            <person name="May G.S."/>
            <person name="Miller B.L."/>
            <person name="Mohamoud Y."/>
            <person name="Molina M."/>
            <person name="Monod M."/>
            <person name="Mouyna I."/>
            <person name="Mulligan S."/>
            <person name="Murphy L.D."/>
            <person name="O'Neil S."/>
            <person name="Paulsen I."/>
            <person name="Penalva M.A."/>
            <person name="Pertea M."/>
            <person name="Price C."/>
            <person name="Pritchard B.L."/>
            <person name="Quail M.A."/>
            <person name="Rabbinowitsch E."/>
            <person name="Rawlins N."/>
            <person name="Rajandream M.A."/>
            <person name="Reichard U."/>
            <person name="Renauld H."/>
            <person name="Robson G.D."/>
            <person name="Rodriguez de Cordoba S."/>
            <person name="Rodriguez-Pena J.M."/>
            <person name="Ronning C.M."/>
            <person name="Rutter S."/>
            <person name="Salzberg S.L."/>
            <person name="Sanchez M."/>
            <person name="Sanchez-Ferrero J.C."/>
            <person name="Saunders D."/>
            <person name="Seeger K."/>
            <person name="Squares R."/>
            <person name="Squares S."/>
            <person name="Takeuchi M."/>
            <person name="Tekaia F."/>
            <person name="Turner G."/>
            <person name="Vazquez de Aldana C.R."/>
            <person name="Weidman J."/>
            <person name="White O."/>
            <person name="Woodward J.R."/>
            <person name="Yu J.-H."/>
            <person name="Fraser C.M."/>
            <person name="Galagan J.E."/>
            <person name="Asai K."/>
            <person name="Machida M."/>
            <person name="Hall N."/>
            <person name="Barrell B.G."/>
            <person name="Denning D.W."/>
        </authorList>
    </citation>
    <scope>NUCLEOTIDE SEQUENCE [LARGE SCALE GENOMIC DNA]</scope>
    <source>
        <strain>ATCC MYA-4609 / CBS 101355 / FGSC A1100 / Af293</strain>
    </source>
</reference>
<reference key="3">
    <citation type="journal article" date="2014" name="Fungal Genet. Biol.">
        <title>The role of AtfA and HOG MAPK pathway in stress tolerance in conidia of Aspergillus fumigatus.</title>
        <authorList>
            <person name="Hagiwara D."/>
            <person name="Suzuki S."/>
            <person name="Kamei K."/>
            <person name="Gonoi T."/>
            <person name="Kawamoto S."/>
        </authorList>
    </citation>
    <scope>FUNCTION</scope>
    <scope>DISRUPTION PHENOTYPE</scope>
</reference>
<reference key="4">
    <citation type="journal article" date="2016" name="Mol. Microbiol.">
        <title>Mitogen activated protein kinases SakA(HOG1) and MpkC collaborate for Aspergillus fumigatus virulence.</title>
        <authorList>
            <person name="Bruder Nascimento A.C."/>
            <person name="Dos Reis T.F."/>
            <person name="de Castro P.A."/>
            <person name="Hori J.I."/>
            <person name="Bom V.L."/>
            <person name="de Assis L.J."/>
            <person name="Ramalho L.N."/>
            <person name="Rocha M.C."/>
            <person name="Malavazi I."/>
            <person name="Brown N.A."/>
            <person name="Valiante V."/>
            <person name="Brakhage A.A."/>
            <person name="Hagiwara D."/>
            <person name="Goldman G.H."/>
        </authorList>
    </citation>
    <scope>FUNCTION</scope>
    <scope>DISRUPTION PHENOTYPE</scope>
    <scope>SUBCELLULAR LOCATION</scope>
    <scope>CATALYTIC ACTIVITY</scope>
</reference>
<reference key="5">
    <citation type="journal article" date="2016" name="Mol. Microbiol.">
        <title>The Aspergillus fumigatus SchASCH9 kinase modulates SakAHOG1 MAP kinase activity and it is essential for virulence.</title>
        <authorList>
            <person name="Alves de Castro P."/>
            <person name="Dos Reis T.F."/>
            <person name="Dolan S.K."/>
            <person name="Oliveira Manfiolli A."/>
            <person name="Brown N.A."/>
            <person name="Jones G.W."/>
            <person name="Doyle S."/>
            <person name="Riano-Pachon D.M."/>
            <person name="Squina F.M."/>
            <person name="Caldana C."/>
            <person name="Singh A."/>
            <person name="Del Poeta M."/>
            <person name="Hagiwara D."/>
            <person name="Silva-Rocha R."/>
            <person name="Goldman G.H."/>
        </authorList>
    </citation>
    <scope>FUNCTION</scope>
    <scope>SUBCELLULAR LOCATION</scope>
</reference>
<reference key="6">
    <citation type="journal article" date="2017" name="Cell. Microbiol.">
        <title>Genome-wide transcriptome analysis of Aspergillus fumigatus exposed to osmotic stress reveals regulators of osmotic and cell wall stresses that are SakA(HOG1) and MpkC dependent.</title>
        <authorList>
            <person name="Pereira Silva L."/>
            <person name="Alves de Castro P."/>
            <person name="Dos Reis T.F."/>
            <person name="Paziani M.H."/>
            <person name="Von Zeska Kress M.R."/>
            <person name="Riano-Pachon D.M."/>
            <person name="Hagiwara D."/>
            <person name="Ries L.N."/>
            <person name="Brown N.A."/>
            <person name="Goldman G.H."/>
        </authorList>
    </citation>
    <scope>FUNCTION</scope>
</reference>
<reference key="7">
    <citation type="journal article" date="2018" name="Cell Surf.">
        <title>Mitogen activated protein kinases (MAPK) and protein phosphatases are involved in Aspergillus fumigatus adhesion and biofilm formation.</title>
        <authorList>
            <person name="Manfiolli A.O."/>
            <person name="Dos Reis T.F."/>
            <person name="de Assis L.J."/>
            <person name="de Castro P.A."/>
            <person name="Silva L.P."/>
            <person name="Hori J.I."/>
            <person name="Walker L.A."/>
            <person name="Munro C.A."/>
            <person name="Rajendran R."/>
            <person name="Ramage G."/>
            <person name="Goldman G.H."/>
        </authorList>
    </citation>
    <scope>FUNCTION</scope>
    <scope>DISRUPTION PHENOTYPE</scope>
</reference>
<reference key="8">
    <citation type="journal article" date="2019" name="Front. Microbiol.">
        <title>Aspergillus fumigatus high osmolarity glycerol mitogen activated protein kinases sakA and mpkC physically interact during osmotic and cell wall Stresses.</title>
        <authorList>
            <person name="Manfiolli A.O."/>
            <person name="Mattos E.C."/>
            <person name="de Assis L.J."/>
            <person name="Silva L.P."/>
            <person name="Ulas M."/>
            <person name="Brown N.A."/>
            <person name="Silva-Rocha R."/>
            <person name="Bayram O."/>
            <person name="Goldman G.H."/>
        </authorList>
    </citation>
    <scope>FUNCTION</scope>
    <scope>INTERACTION WITH SAKA</scope>
</reference>
<sequence>MAEFVRAEVLGTKFEYTTRYVNPQPIGMGSFGLVCSAFDQITQQPVALKKIMKPFDSSSLAKRTYREIRLLKYLRHENLICMRDIFISPLEDIYIATELLGTDLGRLLSIKPLDSKFSQYFIYQILRGLKYIHSANVIHRDLKPTNILINENCDLKICDFGLARLQEPQMTGYVATRYYRAQEIMLTWQRYGVQVDVWSAGCILAEMLRRKPLFPGKDHVHQFHLITNILGNPPDAVIEKITSKNTVNFVKSLPSREPRDLSTVVPKDTDFDAIDLLKKMLVIDPDTRISAQDALRYPYLAPYHDPTDEPVASGPFDWSFDSADFPKETWKIMIYSEVLDYLNVDNPADPAPFDPSTPFDPSALEREFSEFLSDSGQI</sequence>